<protein>
    <recommendedName>
        <fullName>Profilin LP04</fullName>
    </recommendedName>
</protein>
<name>PROFX_ORYSJ</name>
<gene>
    <name type="ordered locus">Os06g0152100</name>
    <name type="ordered locus">LOC_Os06g05880</name>
    <name type="ORF">OsJ_019338</name>
    <name type="ORF">P0529C07.32</name>
    <name type="ORF">P0710H01.44</name>
</gene>
<feature type="initiator methionine" description="Removed" evidence="1">
    <location>
        <position position="1"/>
    </location>
</feature>
<feature type="chain" id="PRO_0000332744" description="Profilin LP04">
    <location>
        <begin position="2"/>
        <end position="131"/>
    </location>
</feature>
<comment type="function">
    <text evidence="1">Binds to actin and affects the structure of the cytoskeleton. At high concentrations, profilin prevents the polymerization of actin, whereas it enhances it at low concentrations. By binding to PIP2, it inhibits the formation of IP3 and DG (By similarity).</text>
</comment>
<comment type="subunit">
    <text>Occurs in many kinds of cells as a complex with monomeric actin in a 1:1 ratio.</text>
</comment>
<comment type="subcellular location">
    <subcellularLocation>
        <location evidence="1">Cytoplasm</location>
        <location evidence="1">Cytoskeleton</location>
    </subcellularLocation>
</comment>
<comment type="similarity">
    <text evidence="2">Belongs to the profilin family.</text>
</comment>
<dbReference type="EMBL" id="AP004806">
    <property type="protein sequence ID" value="BAD69068.1"/>
    <property type="molecule type" value="Genomic_DNA"/>
</dbReference>
<dbReference type="EMBL" id="AP006554">
    <property type="protein sequence ID" value="BAD69332.1"/>
    <property type="molecule type" value="Genomic_DNA"/>
</dbReference>
<dbReference type="EMBL" id="AP008212">
    <property type="protein sequence ID" value="BAF18747.1"/>
    <property type="molecule type" value="Genomic_DNA"/>
</dbReference>
<dbReference type="EMBL" id="AP014962">
    <property type="protein sequence ID" value="BAS96199.1"/>
    <property type="molecule type" value="Genomic_DNA"/>
</dbReference>
<dbReference type="EMBL" id="CM000143">
    <property type="protein sequence ID" value="EAZ35855.1"/>
    <property type="molecule type" value="Genomic_DNA"/>
</dbReference>
<dbReference type="EMBL" id="AK058798">
    <property type="protein sequence ID" value="BAG86802.1"/>
    <property type="molecule type" value="mRNA"/>
</dbReference>
<dbReference type="EMBL" id="AK121519">
    <property type="protein sequence ID" value="BAH00531.1"/>
    <property type="molecule type" value="mRNA"/>
</dbReference>
<dbReference type="RefSeq" id="XP_015642483.1">
    <property type="nucleotide sequence ID" value="XM_015786997.1"/>
</dbReference>
<dbReference type="SMR" id="Q5VMJ3"/>
<dbReference type="BioGRID" id="809192">
    <property type="interactions" value="1"/>
</dbReference>
<dbReference type="FunCoup" id="Q5VMJ3">
    <property type="interactions" value="627"/>
</dbReference>
<dbReference type="STRING" id="39947.Q5VMJ3"/>
<dbReference type="Allergome" id="996">
    <property type="allergen name" value="Ory s 12"/>
</dbReference>
<dbReference type="PaxDb" id="39947-Q5VMJ3"/>
<dbReference type="EnsemblPlants" id="Os06t0152100-01">
    <property type="protein sequence ID" value="Os06t0152100-01"/>
    <property type="gene ID" value="Os06g0152100"/>
</dbReference>
<dbReference type="Gramene" id="Os06t0152100-01">
    <property type="protein sequence ID" value="Os06t0152100-01"/>
    <property type="gene ID" value="Os06g0152100"/>
</dbReference>
<dbReference type="KEGG" id="dosa:Os06g0152100"/>
<dbReference type="eggNOG" id="KOG1755">
    <property type="taxonomic scope" value="Eukaryota"/>
</dbReference>
<dbReference type="HOGENOM" id="CLU_120772_0_1_1"/>
<dbReference type="InParanoid" id="Q5VMJ3"/>
<dbReference type="OMA" id="HHAENVQ"/>
<dbReference type="OrthoDB" id="421374at2759"/>
<dbReference type="Proteomes" id="UP000000763">
    <property type="component" value="Chromosome 6"/>
</dbReference>
<dbReference type="Proteomes" id="UP000007752">
    <property type="component" value="Chromosome 6"/>
</dbReference>
<dbReference type="Proteomes" id="UP000059680">
    <property type="component" value="Chromosome 6"/>
</dbReference>
<dbReference type="GO" id="GO:0005938">
    <property type="term" value="C:cell cortex"/>
    <property type="evidence" value="ECO:0000318"/>
    <property type="project" value="GO_Central"/>
</dbReference>
<dbReference type="GO" id="GO:0005856">
    <property type="term" value="C:cytoskeleton"/>
    <property type="evidence" value="ECO:0007669"/>
    <property type="project" value="UniProtKB-SubCell"/>
</dbReference>
<dbReference type="GO" id="GO:0003785">
    <property type="term" value="F:actin monomer binding"/>
    <property type="evidence" value="ECO:0000318"/>
    <property type="project" value="GO_Central"/>
</dbReference>
<dbReference type="CDD" id="cd00148">
    <property type="entry name" value="PROF"/>
    <property type="match status" value="1"/>
</dbReference>
<dbReference type="FunFam" id="3.30.450.30:FF:000001">
    <property type="entry name" value="Profilin"/>
    <property type="match status" value="1"/>
</dbReference>
<dbReference type="Gene3D" id="3.30.450.30">
    <property type="entry name" value="Dynein light chain 2a, cytoplasmic"/>
    <property type="match status" value="1"/>
</dbReference>
<dbReference type="InterPro" id="IPR048278">
    <property type="entry name" value="PFN"/>
</dbReference>
<dbReference type="InterPro" id="IPR005455">
    <property type="entry name" value="PFN_euk"/>
</dbReference>
<dbReference type="InterPro" id="IPR036140">
    <property type="entry name" value="PFN_sf"/>
</dbReference>
<dbReference type="InterPro" id="IPR027310">
    <property type="entry name" value="Profilin_CS"/>
</dbReference>
<dbReference type="PANTHER" id="PTHR11604">
    <property type="entry name" value="PROFILIN"/>
    <property type="match status" value="1"/>
</dbReference>
<dbReference type="PANTHER" id="PTHR11604:SF67">
    <property type="entry name" value="PROFILIN LP04"/>
    <property type="match status" value="1"/>
</dbReference>
<dbReference type="Pfam" id="PF00235">
    <property type="entry name" value="Profilin"/>
    <property type="match status" value="1"/>
</dbReference>
<dbReference type="PRINTS" id="PR00392">
    <property type="entry name" value="PROFILIN"/>
</dbReference>
<dbReference type="PRINTS" id="PR01640">
    <property type="entry name" value="PROFILINPLNT"/>
</dbReference>
<dbReference type="SMART" id="SM00392">
    <property type="entry name" value="PROF"/>
    <property type="match status" value="1"/>
</dbReference>
<dbReference type="SUPFAM" id="SSF55770">
    <property type="entry name" value="Profilin (actin-binding protein)"/>
    <property type="match status" value="1"/>
</dbReference>
<dbReference type="PROSITE" id="PS00414">
    <property type="entry name" value="PROFILIN"/>
    <property type="match status" value="1"/>
</dbReference>
<keyword id="KW-0009">Actin-binding</keyword>
<keyword id="KW-0963">Cytoplasm</keyword>
<keyword id="KW-0206">Cytoskeleton</keyword>
<keyword id="KW-1185">Reference proteome</keyword>
<sequence>MSWQAYVDDHLMCEIDGNHLTAAAIVGHDGSVWAQSPNFPQYKPEEITGIMKDFDEPGSLAPTGLFLGGTKYMVIQGEPGVVIRGKKGTGGICVKKTGLSLILGIYDEPMTPGQCNMIVERLGDYLIEQGC</sequence>
<accession>Q5VMJ3</accession>
<accession>B7E355</accession>
<proteinExistence type="evidence at transcript level"/>
<organism>
    <name type="scientific">Oryza sativa subsp. japonica</name>
    <name type="common">Rice</name>
    <dbReference type="NCBI Taxonomy" id="39947"/>
    <lineage>
        <taxon>Eukaryota</taxon>
        <taxon>Viridiplantae</taxon>
        <taxon>Streptophyta</taxon>
        <taxon>Embryophyta</taxon>
        <taxon>Tracheophyta</taxon>
        <taxon>Spermatophyta</taxon>
        <taxon>Magnoliopsida</taxon>
        <taxon>Liliopsida</taxon>
        <taxon>Poales</taxon>
        <taxon>Poaceae</taxon>
        <taxon>BOP clade</taxon>
        <taxon>Oryzoideae</taxon>
        <taxon>Oryzeae</taxon>
        <taxon>Oryzinae</taxon>
        <taxon>Oryza</taxon>
        <taxon>Oryza sativa</taxon>
    </lineage>
</organism>
<reference key="1">
    <citation type="journal article" date="2005" name="Nature">
        <title>The map-based sequence of the rice genome.</title>
        <authorList>
            <consortium name="International rice genome sequencing project (IRGSP)"/>
        </authorList>
    </citation>
    <scope>NUCLEOTIDE SEQUENCE [LARGE SCALE GENOMIC DNA]</scope>
    <source>
        <strain>cv. Nipponbare</strain>
    </source>
</reference>
<reference key="2">
    <citation type="journal article" date="2008" name="Nucleic Acids Res.">
        <title>The rice annotation project database (RAP-DB): 2008 update.</title>
        <authorList>
            <consortium name="The rice annotation project (RAP)"/>
        </authorList>
    </citation>
    <scope>GENOME REANNOTATION</scope>
    <source>
        <strain>cv. Nipponbare</strain>
    </source>
</reference>
<reference key="3">
    <citation type="journal article" date="2013" name="Rice">
        <title>Improvement of the Oryza sativa Nipponbare reference genome using next generation sequence and optical map data.</title>
        <authorList>
            <person name="Kawahara Y."/>
            <person name="de la Bastide M."/>
            <person name="Hamilton J.P."/>
            <person name="Kanamori H."/>
            <person name="McCombie W.R."/>
            <person name="Ouyang S."/>
            <person name="Schwartz D.C."/>
            <person name="Tanaka T."/>
            <person name="Wu J."/>
            <person name="Zhou S."/>
            <person name="Childs K.L."/>
            <person name="Davidson R.M."/>
            <person name="Lin H."/>
            <person name="Quesada-Ocampo L."/>
            <person name="Vaillancourt B."/>
            <person name="Sakai H."/>
            <person name="Lee S.S."/>
            <person name="Kim J."/>
            <person name="Numa H."/>
            <person name="Itoh T."/>
            <person name="Buell C.R."/>
            <person name="Matsumoto T."/>
        </authorList>
    </citation>
    <scope>GENOME REANNOTATION</scope>
    <source>
        <strain>cv. Nipponbare</strain>
    </source>
</reference>
<reference key="4">
    <citation type="journal article" date="2005" name="PLoS Biol.">
        <title>The genomes of Oryza sativa: a history of duplications.</title>
        <authorList>
            <person name="Yu J."/>
            <person name="Wang J."/>
            <person name="Lin W."/>
            <person name="Li S."/>
            <person name="Li H."/>
            <person name="Zhou J."/>
            <person name="Ni P."/>
            <person name="Dong W."/>
            <person name="Hu S."/>
            <person name="Zeng C."/>
            <person name="Zhang J."/>
            <person name="Zhang Y."/>
            <person name="Li R."/>
            <person name="Xu Z."/>
            <person name="Li S."/>
            <person name="Li X."/>
            <person name="Zheng H."/>
            <person name="Cong L."/>
            <person name="Lin L."/>
            <person name="Yin J."/>
            <person name="Geng J."/>
            <person name="Li G."/>
            <person name="Shi J."/>
            <person name="Liu J."/>
            <person name="Lv H."/>
            <person name="Li J."/>
            <person name="Wang J."/>
            <person name="Deng Y."/>
            <person name="Ran L."/>
            <person name="Shi X."/>
            <person name="Wang X."/>
            <person name="Wu Q."/>
            <person name="Li C."/>
            <person name="Ren X."/>
            <person name="Wang J."/>
            <person name="Wang X."/>
            <person name="Li D."/>
            <person name="Liu D."/>
            <person name="Zhang X."/>
            <person name="Ji Z."/>
            <person name="Zhao W."/>
            <person name="Sun Y."/>
            <person name="Zhang Z."/>
            <person name="Bao J."/>
            <person name="Han Y."/>
            <person name="Dong L."/>
            <person name="Ji J."/>
            <person name="Chen P."/>
            <person name="Wu S."/>
            <person name="Liu J."/>
            <person name="Xiao Y."/>
            <person name="Bu D."/>
            <person name="Tan J."/>
            <person name="Yang L."/>
            <person name="Ye C."/>
            <person name="Zhang J."/>
            <person name="Xu J."/>
            <person name="Zhou Y."/>
            <person name="Yu Y."/>
            <person name="Zhang B."/>
            <person name="Zhuang S."/>
            <person name="Wei H."/>
            <person name="Liu B."/>
            <person name="Lei M."/>
            <person name="Yu H."/>
            <person name="Li Y."/>
            <person name="Xu H."/>
            <person name="Wei S."/>
            <person name="He X."/>
            <person name="Fang L."/>
            <person name="Zhang Z."/>
            <person name="Zhang Y."/>
            <person name="Huang X."/>
            <person name="Su Z."/>
            <person name="Tong W."/>
            <person name="Li J."/>
            <person name="Tong Z."/>
            <person name="Li S."/>
            <person name="Ye J."/>
            <person name="Wang L."/>
            <person name="Fang L."/>
            <person name="Lei T."/>
            <person name="Chen C.-S."/>
            <person name="Chen H.-C."/>
            <person name="Xu Z."/>
            <person name="Li H."/>
            <person name="Huang H."/>
            <person name="Zhang F."/>
            <person name="Xu H."/>
            <person name="Li N."/>
            <person name="Zhao C."/>
            <person name="Li S."/>
            <person name="Dong L."/>
            <person name="Huang Y."/>
            <person name="Li L."/>
            <person name="Xi Y."/>
            <person name="Qi Q."/>
            <person name="Li W."/>
            <person name="Zhang B."/>
            <person name="Hu W."/>
            <person name="Zhang Y."/>
            <person name="Tian X."/>
            <person name="Jiao Y."/>
            <person name="Liang X."/>
            <person name="Jin J."/>
            <person name="Gao L."/>
            <person name="Zheng W."/>
            <person name="Hao B."/>
            <person name="Liu S.-M."/>
            <person name="Wang W."/>
            <person name="Yuan L."/>
            <person name="Cao M."/>
            <person name="McDermott J."/>
            <person name="Samudrala R."/>
            <person name="Wang J."/>
            <person name="Wong G.K.-S."/>
            <person name="Yang H."/>
        </authorList>
    </citation>
    <scope>NUCLEOTIDE SEQUENCE [LARGE SCALE GENOMIC DNA]</scope>
    <source>
        <strain>cv. Nipponbare</strain>
    </source>
</reference>
<reference key="5">
    <citation type="journal article" date="2003" name="Science">
        <title>Collection, mapping, and annotation of over 28,000 cDNA clones from japonica rice.</title>
        <authorList>
            <consortium name="The rice full-length cDNA consortium"/>
        </authorList>
    </citation>
    <scope>NUCLEOTIDE SEQUENCE [LARGE SCALE MRNA]</scope>
    <source>
        <strain>cv. Nipponbare</strain>
    </source>
</reference>
<evidence type="ECO:0000250" key="1"/>
<evidence type="ECO:0000305" key="2"/>